<name>DNAA_LACP3</name>
<dbReference type="EMBL" id="CP000423">
    <property type="protein sequence ID" value="ABJ68867.1"/>
    <property type="molecule type" value="Genomic_DNA"/>
</dbReference>
<dbReference type="RefSeq" id="WP_011673926.1">
    <property type="nucleotide sequence ID" value="NC_008526.1"/>
</dbReference>
<dbReference type="RefSeq" id="YP_805309.1">
    <property type="nucleotide sequence ID" value="NC_008526.1"/>
</dbReference>
<dbReference type="SMR" id="Q03D55"/>
<dbReference type="STRING" id="321967.LSEI_0001"/>
<dbReference type="PaxDb" id="321967-LSEI_0001"/>
<dbReference type="KEGG" id="lca:LSEI_0001"/>
<dbReference type="PATRIC" id="fig|321967.11.peg.35"/>
<dbReference type="HOGENOM" id="CLU_026910_3_1_9"/>
<dbReference type="Proteomes" id="UP000001651">
    <property type="component" value="Chromosome"/>
</dbReference>
<dbReference type="GO" id="GO:0005737">
    <property type="term" value="C:cytoplasm"/>
    <property type="evidence" value="ECO:0007669"/>
    <property type="project" value="UniProtKB-SubCell"/>
</dbReference>
<dbReference type="GO" id="GO:0005886">
    <property type="term" value="C:plasma membrane"/>
    <property type="evidence" value="ECO:0007669"/>
    <property type="project" value="TreeGrafter"/>
</dbReference>
<dbReference type="GO" id="GO:0005524">
    <property type="term" value="F:ATP binding"/>
    <property type="evidence" value="ECO:0007669"/>
    <property type="project" value="UniProtKB-UniRule"/>
</dbReference>
<dbReference type="GO" id="GO:0016887">
    <property type="term" value="F:ATP hydrolysis activity"/>
    <property type="evidence" value="ECO:0007669"/>
    <property type="project" value="InterPro"/>
</dbReference>
<dbReference type="GO" id="GO:0003688">
    <property type="term" value="F:DNA replication origin binding"/>
    <property type="evidence" value="ECO:0007669"/>
    <property type="project" value="UniProtKB-UniRule"/>
</dbReference>
<dbReference type="GO" id="GO:0008289">
    <property type="term" value="F:lipid binding"/>
    <property type="evidence" value="ECO:0007669"/>
    <property type="project" value="UniProtKB-KW"/>
</dbReference>
<dbReference type="GO" id="GO:0006270">
    <property type="term" value="P:DNA replication initiation"/>
    <property type="evidence" value="ECO:0007669"/>
    <property type="project" value="UniProtKB-UniRule"/>
</dbReference>
<dbReference type="GO" id="GO:0006275">
    <property type="term" value="P:regulation of DNA replication"/>
    <property type="evidence" value="ECO:0007669"/>
    <property type="project" value="UniProtKB-UniRule"/>
</dbReference>
<dbReference type="CDD" id="cd00009">
    <property type="entry name" value="AAA"/>
    <property type="match status" value="1"/>
</dbReference>
<dbReference type="CDD" id="cd06571">
    <property type="entry name" value="Bac_DnaA_C"/>
    <property type="match status" value="1"/>
</dbReference>
<dbReference type="FunFam" id="1.10.1750.10:FF:000002">
    <property type="entry name" value="Chromosomal replication initiator protein DnaA"/>
    <property type="match status" value="1"/>
</dbReference>
<dbReference type="FunFam" id="1.10.8.60:FF:000003">
    <property type="entry name" value="Chromosomal replication initiator protein DnaA"/>
    <property type="match status" value="1"/>
</dbReference>
<dbReference type="FunFam" id="3.40.50.300:FF:000668">
    <property type="entry name" value="Chromosomal replication initiator protein DnaA"/>
    <property type="match status" value="1"/>
</dbReference>
<dbReference type="Gene3D" id="1.10.1750.10">
    <property type="match status" value="1"/>
</dbReference>
<dbReference type="Gene3D" id="1.10.8.60">
    <property type="match status" value="1"/>
</dbReference>
<dbReference type="Gene3D" id="3.30.300.180">
    <property type="match status" value="1"/>
</dbReference>
<dbReference type="Gene3D" id="3.40.50.300">
    <property type="entry name" value="P-loop containing nucleotide triphosphate hydrolases"/>
    <property type="match status" value="1"/>
</dbReference>
<dbReference type="HAMAP" id="MF_00377">
    <property type="entry name" value="DnaA_bact"/>
    <property type="match status" value="1"/>
</dbReference>
<dbReference type="InterPro" id="IPR003593">
    <property type="entry name" value="AAA+_ATPase"/>
</dbReference>
<dbReference type="InterPro" id="IPR001957">
    <property type="entry name" value="Chromosome_initiator_DnaA"/>
</dbReference>
<dbReference type="InterPro" id="IPR020591">
    <property type="entry name" value="Chromosome_initiator_DnaA-like"/>
</dbReference>
<dbReference type="InterPro" id="IPR018312">
    <property type="entry name" value="Chromosome_initiator_DnaA_CS"/>
</dbReference>
<dbReference type="InterPro" id="IPR013159">
    <property type="entry name" value="DnaA_C"/>
</dbReference>
<dbReference type="InterPro" id="IPR013317">
    <property type="entry name" value="DnaA_dom"/>
</dbReference>
<dbReference type="InterPro" id="IPR038454">
    <property type="entry name" value="DnaA_N_sf"/>
</dbReference>
<dbReference type="InterPro" id="IPR027417">
    <property type="entry name" value="P-loop_NTPase"/>
</dbReference>
<dbReference type="InterPro" id="IPR010921">
    <property type="entry name" value="Trp_repressor/repl_initiator"/>
</dbReference>
<dbReference type="NCBIfam" id="TIGR00362">
    <property type="entry name" value="DnaA"/>
    <property type="match status" value="1"/>
</dbReference>
<dbReference type="PANTHER" id="PTHR30050">
    <property type="entry name" value="CHROMOSOMAL REPLICATION INITIATOR PROTEIN DNAA"/>
    <property type="match status" value="1"/>
</dbReference>
<dbReference type="PANTHER" id="PTHR30050:SF2">
    <property type="entry name" value="CHROMOSOMAL REPLICATION INITIATOR PROTEIN DNAA"/>
    <property type="match status" value="1"/>
</dbReference>
<dbReference type="Pfam" id="PF00308">
    <property type="entry name" value="Bac_DnaA"/>
    <property type="match status" value="1"/>
</dbReference>
<dbReference type="Pfam" id="PF08299">
    <property type="entry name" value="Bac_DnaA_C"/>
    <property type="match status" value="1"/>
</dbReference>
<dbReference type="PRINTS" id="PR00051">
    <property type="entry name" value="DNAA"/>
</dbReference>
<dbReference type="SMART" id="SM00382">
    <property type="entry name" value="AAA"/>
    <property type="match status" value="1"/>
</dbReference>
<dbReference type="SMART" id="SM00760">
    <property type="entry name" value="Bac_DnaA_C"/>
    <property type="match status" value="1"/>
</dbReference>
<dbReference type="SUPFAM" id="SSF52540">
    <property type="entry name" value="P-loop containing nucleoside triphosphate hydrolases"/>
    <property type="match status" value="1"/>
</dbReference>
<dbReference type="SUPFAM" id="SSF48295">
    <property type="entry name" value="TrpR-like"/>
    <property type="match status" value="1"/>
</dbReference>
<dbReference type="PROSITE" id="PS01008">
    <property type="entry name" value="DNAA"/>
    <property type="match status" value="1"/>
</dbReference>
<gene>
    <name evidence="1" type="primary">dnaA</name>
    <name type="ordered locus">LSEI_0001</name>
</gene>
<proteinExistence type="inferred from homology"/>
<comment type="function">
    <text evidence="1">Plays an essential role in the initiation and regulation of chromosomal replication. ATP-DnaA binds to the origin of replication (oriC) to initiate formation of the DNA replication initiation complex once per cell cycle. Binds the DnaA box (a 9 base pair repeat at the origin) and separates the double-stranded (ds)DNA. Forms a right-handed helical filament on oriC DNA; dsDNA binds to the exterior of the filament while single-stranded (ss)DNA is stabiized in the filament's interior. The ATP-DnaA-oriC complex binds and stabilizes one strand of the AT-rich DNA unwinding element (DUE), permitting loading of DNA polymerase. After initiation quickly degrades to an ADP-DnaA complex that is not apt for DNA replication. Binds acidic phospholipids.</text>
</comment>
<comment type="subunit">
    <text evidence="1">Oligomerizes as a right-handed, spiral filament on DNA at oriC.</text>
</comment>
<comment type="subcellular location">
    <subcellularLocation>
        <location evidence="1">Cytoplasm</location>
    </subcellularLocation>
</comment>
<comment type="domain">
    <text evidence="1">Domain I is involved in oligomerization and binding regulators, domain II is flexibile and of varying length in different bacteria, domain III forms the AAA+ region, while domain IV binds dsDNA.</text>
</comment>
<comment type="similarity">
    <text evidence="1">Belongs to the DnaA family.</text>
</comment>
<feature type="chain" id="PRO_1000048660" description="Chromosomal replication initiator protein DnaA">
    <location>
        <begin position="1"/>
        <end position="449"/>
    </location>
</feature>
<feature type="region of interest" description="Domain I, interacts with DnaA modulators" evidence="1">
    <location>
        <begin position="1"/>
        <end position="72"/>
    </location>
</feature>
<feature type="region of interest" description="Domain II" evidence="1">
    <location>
        <begin position="72"/>
        <end position="109"/>
    </location>
</feature>
<feature type="region of interest" description="Domain III, AAA+ region" evidence="1">
    <location>
        <begin position="110"/>
        <end position="326"/>
    </location>
</feature>
<feature type="region of interest" description="Domain IV, binds dsDNA" evidence="1">
    <location>
        <begin position="327"/>
        <end position="449"/>
    </location>
</feature>
<feature type="binding site" evidence="1">
    <location>
        <position position="154"/>
    </location>
    <ligand>
        <name>ATP</name>
        <dbReference type="ChEBI" id="CHEBI:30616"/>
    </ligand>
</feature>
<feature type="binding site" evidence="1">
    <location>
        <position position="156"/>
    </location>
    <ligand>
        <name>ATP</name>
        <dbReference type="ChEBI" id="CHEBI:30616"/>
    </ligand>
</feature>
<feature type="binding site" evidence="1">
    <location>
        <position position="157"/>
    </location>
    <ligand>
        <name>ATP</name>
        <dbReference type="ChEBI" id="CHEBI:30616"/>
    </ligand>
</feature>
<feature type="binding site" evidence="1">
    <location>
        <position position="158"/>
    </location>
    <ligand>
        <name>ATP</name>
        <dbReference type="ChEBI" id="CHEBI:30616"/>
    </ligand>
</feature>
<accession>Q03D55</accession>
<organism>
    <name type="scientific">Lacticaseibacillus paracasei (strain ATCC 334 / BCRC 17002 / CCUG 31169 / CIP 107868 / KCTC 3260 / NRRL B-441)</name>
    <name type="common">Lactobacillus paracasei</name>
    <dbReference type="NCBI Taxonomy" id="321967"/>
    <lineage>
        <taxon>Bacteria</taxon>
        <taxon>Bacillati</taxon>
        <taxon>Bacillota</taxon>
        <taxon>Bacilli</taxon>
        <taxon>Lactobacillales</taxon>
        <taxon>Lactobacillaceae</taxon>
        <taxon>Lacticaseibacillus</taxon>
    </lineage>
</organism>
<sequence>MPNLEELWAYLNDKFREELTPVGYSTWIQTAKPVKLTKDKLEIEVPASLHKAYWEKNLVTKVVEGVYEFAQLEVDPVIMTKDELQPAPATDQRPAVEEDDQNLTFKAKTHLNPKYTFDHFVIGKGNQMAHAAALAVAEAPGTTYNPLFIYGGVGLGKTHLMQAIGNLVLGNNPAANIKYVTSENFANDFINSIQTKQQEQFRQEYRNVDLLLVDDIQFFGDKEATQEEFFHTFNTLYENMKQIVLTSDRLPNEIPKLQERLVSRFNKGLSVDVTPPDLETRIAILRNKADAEDLSIPDDTLSYIAGQIESNVRDLEGALVRVQAFSTMKNEDITTSLAADALKALKLDDRSGQLTIPQILNAVAKYFQLTVQDLKGKKRVKQIVIPRQIAMYLAREMTDNSLPKIGQEIGGKDHTTVIHAHEKIMASMTTDENLKAQVIELRNILKNRG</sequence>
<reference key="1">
    <citation type="journal article" date="2006" name="Proc. Natl. Acad. Sci. U.S.A.">
        <title>Comparative genomics of the lactic acid bacteria.</title>
        <authorList>
            <person name="Makarova K.S."/>
            <person name="Slesarev A."/>
            <person name="Wolf Y.I."/>
            <person name="Sorokin A."/>
            <person name="Mirkin B."/>
            <person name="Koonin E.V."/>
            <person name="Pavlov A."/>
            <person name="Pavlova N."/>
            <person name="Karamychev V."/>
            <person name="Polouchine N."/>
            <person name="Shakhova V."/>
            <person name="Grigoriev I."/>
            <person name="Lou Y."/>
            <person name="Rohksar D."/>
            <person name="Lucas S."/>
            <person name="Huang K."/>
            <person name="Goodstein D.M."/>
            <person name="Hawkins T."/>
            <person name="Plengvidhya V."/>
            <person name="Welker D."/>
            <person name="Hughes J."/>
            <person name="Goh Y."/>
            <person name="Benson A."/>
            <person name="Baldwin K."/>
            <person name="Lee J.-H."/>
            <person name="Diaz-Muniz I."/>
            <person name="Dosti B."/>
            <person name="Smeianov V."/>
            <person name="Wechter W."/>
            <person name="Barabote R."/>
            <person name="Lorca G."/>
            <person name="Altermann E."/>
            <person name="Barrangou R."/>
            <person name="Ganesan B."/>
            <person name="Xie Y."/>
            <person name="Rawsthorne H."/>
            <person name="Tamir D."/>
            <person name="Parker C."/>
            <person name="Breidt F."/>
            <person name="Broadbent J.R."/>
            <person name="Hutkins R."/>
            <person name="O'Sullivan D."/>
            <person name="Steele J."/>
            <person name="Unlu G."/>
            <person name="Saier M.H. Jr."/>
            <person name="Klaenhammer T."/>
            <person name="Richardson P."/>
            <person name="Kozyavkin S."/>
            <person name="Weimer B.C."/>
            <person name="Mills D.A."/>
        </authorList>
    </citation>
    <scope>NUCLEOTIDE SEQUENCE [LARGE SCALE GENOMIC DNA]</scope>
    <source>
        <strain>ATCC 334 / BCRC 17002 / CCUG 31169 / CIP 107868 / KCTC 3260 / NRRL B-441</strain>
    </source>
</reference>
<protein>
    <recommendedName>
        <fullName evidence="1">Chromosomal replication initiator protein DnaA</fullName>
    </recommendedName>
</protein>
<evidence type="ECO:0000255" key="1">
    <source>
        <dbReference type="HAMAP-Rule" id="MF_00377"/>
    </source>
</evidence>
<keyword id="KW-0067">ATP-binding</keyword>
<keyword id="KW-0963">Cytoplasm</keyword>
<keyword id="KW-0235">DNA replication</keyword>
<keyword id="KW-0238">DNA-binding</keyword>
<keyword id="KW-0446">Lipid-binding</keyword>
<keyword id="KW-0547">Nucleotide-binding</keyword>
<keyword id="KW-1185">Reference proteome</keyword>